<reference key="1">
    <citation type="journal article" date="2005" name="Nature">
        <title>The genome sequence of the rice blast fungus Magnaporthe grisea.</title>
        <authorList>
            <person name="Dean R.A."/>
            <person name="Talbot N.J."/>
            <person name="Ebbole D.J."/>
            <person name="Farman M.L."/>
            <person name="Mitchell T.K."/>
            <person name="Orbach M.J."/>
            <person name="Thon M.R."/>
            <person name="Kulkarni R."/>
            <person name="Xu J.-R."/>
            <person name="Pan H."/>
            <person name="Read N.D."/>
            <person name="Lee Y.-H."/>
            <person name="Carbone I."/>
            <person name="Brown D."/>
            <person name="Oh Y.Y."/>
            <person name="Donofrio N."/>
            <person name="Jeong J.S."/>
            <person name="Soanes D.M."/>
            <person name="Djonovic S."/>
            <person name="Kolomiets E."/>
            <person name="Rehmeyer C."/>
            <person name="Li W."/>
            <person name="Harding M."/>
            <person name="Kim S."/>
            <person name="Lebrun M.-H."/>
            <person name="Bohnert H."/>
            <person name="Coughlan S."/>
            <person name="Butler J."/>
            <person name="Calvo S.E."/>
            <person name="Ma L.-J."/>
            <person name="Nicol R."/>
            <person name="Purcell S."/>
            <person name="Nusbaum C."/>
            <person name="Galagan J.E."/>
            <person name="Birren B.W."/>
        </authorList>
    </citation>
    <scope>NUCLEOTIDE SEQUENCE [LARGE SCALE GENOMIC DNA]</scope>
    <source>
        <strain>70-15 / ATCC MYA-4617 / FGSC 8958</strain>
    </source>
</reference>
<reference key="2">
    <citation type="journal article" date="2008" name="New Phytol.">
        <title>Magnaporthe grisea avirulence gene ACE1 belongs to an infection-specific gene cluster involved in secondary metabolism.</title>
        <authorList>
            <person name="Collemare J."/>
            <person name="Pianfetti M."/>
            <person name="Houlle A.E."/>
            <person name="Morin D."/>
            <person name="Camborde L."/>
            <person name="Gagey M.J."/>
            <person name="Barbisan C."/>
            <person name="Fudal I."/>
            <person name="Lebrun M.H."/>
            <person name="Boehnert H.U."/>
        </authorList>
    </citation>
    <scope>FUNCTION</scope>
    <scope>INDUCTION</scope>
    <scope>PATHWAY</scope>
</reference>
<reference key="3">
    <citation type="journal article" date="2015" name="Chem. Sci.">
        <title>Heterologous expression of the avirulence gene ACE1 from the fungal rice pathogen Magnaporthe oryzae.</title>
        <authorList>
            <person name="Song Z."/>
            <person name="Bakeer W."/>
            <person name="Marshall J.W."/>
            <person name="Yakasai A.A."/>
            <person name="Khalid R.M."/>
            <person name="Collemare J."/>
            <person name="Skellam E."/>
            <person name="Tharreau D."/>
            <person name="Lebrun M.H."/>
            <person name="Lazarus C.M."/>
            <person name="Bailey A.M."/>
            <person name="Simpson T.J."/>
            <person name="Cox R.J."/>
        </authorList>
    </citation>
    <scope>FUNCTION</scope>
</reference>
<reference key="4">
    <citation type="journal article" date="2019" name="Org. Lett.">
        <title>Investigating the function of cryptic cytochalasan cytochrome P450 monooxygenases using combinatorial biosynthesis.</title>
        <authorList>
            <person name="Wang C."/>
            <person name="Becker K."/>
            <person name="Pfuetze S."/>
            <person name="Kuhnert E."/>
            <person name="Stadler M."/>
            <person name="Cox R.J."/>
            <person name="Skellam E."/>
        </authorList>
    </citation>
    <scope>FUNCTION</scope>
</reference>
<comment type="function">
    <text evidence="3 4 5 8 9">O-methyltransferase; part of the gene cluster that mediates the biosynthesis of a tyrosine-derived cytochalasan acting as a fungal signal recognized by resistant rice plants and leads to avirulence in Pi33 resistant rice cultivars (PubMed:18433432). The first step in the pathway is catalyzed by the hybrid PKS-NRPS ACE1, assisted by the enoyl reductase RAP1, that are responsible for fusion of the tyrosine precursor and the polyketide backbone (PubMed:29142718). The polyketide synthase module (PKS) of ACE1 is responsible for the synthesis of the polyketide backbone and the downstream nonribosomal peptide synthetase (NRPS) amidates the carboxyl end of the polyketide with the tyrosine precursor (PubMed:29142718). Because ACE1 lacks a designated enoylreductase (ER) domain, the required activity is provided the enoyl reductase RAP1 (PubMed:29142718). Reduction by the hydrolyase ORFZ, followed by dehydration and intra-molecular Diels-Alder cyclization by the Diels-Alderase ORF3 then yield the required isoindolone-fused macrocycle (Probable). A number of oxidative steps catalyzed by the tailoring enzymes identified within the cluster, including cytochrome P450 monooxygenases CYP1 to CYP4, the FAD-linked oxidoreductase OXR2 and the short-chain dehydrogenase/reductase OXR1, are further required to afford the final cytochalasans that confer avirulence and which have still to be identified (Probable). The monooxygenase CYP1 has been shown to be a site-selective C-18 hydroxylase whereas the function of CYP3 is the site-selective epoxidation of the C-6/C-7 olefin that is present in some intermediate compounds (PubMed:31644300). Finally, SYN2 and RAP2 are not required for avirulence in Pi33 resistant rice cultivars (PubMed:18433432).</text>
</comment>
<comment type="pathway">
    <text evidence="8">Secondary metabolite biosynthesis.</text>
</comment>
<comment type="induction">
    <text evidence="3">Expressed exclusively during fungal penetration of host leaves, the time point at which plant defense reactions are triggered.</text>
</comment>
<comment type="similarity">
    <text evidence="1">Belongs to the class I-like SAM-binding methyltransferase superfamily. Cation-independent O-methyltransferase family.</text>
</comment>
<accession>G4MWB6</accession>
<gene>
    <name evidence="6" type="primary">OME1</name>
    <name type="ORF">MGG_08377</name>
</gene>
<protein>
    <recommendedName>
        <fullName evidence="6">O-methyltransferase OME1</fullName>
        <ecNumber evidence="8">2.1.1.-</ecNumber>
    </recommendedName>
    <alternativeName>
        <fullName evidence="7">ACE1 cytochalasan biosynthesis cluster protein OME1</fullName>
    </alternativeName>
</protein>
<evidence type="ECO:0000255" key="1">
    <source>
        <dbReference type="PROSITE-ProRule" id="PRU01020"/>
    </source>
</evidence>
<evidence type="ECO:0000256" key="2">
    <source>
        <dbReference type="SAM" id="MobiDB-lite"/>
    </source>
</evidence>
<evidence type="ECO:0000269" key="3">
    <source>
    </source>
</evidence>
<evidence type="ECO:0000269" key="4">
    <source>
    </source>
</evidence>
<evidence type="ECO:0000269" key="5">
    <source>
    </source>
</evidence>
<evidence type="ECO:0000303" key="6">
    <source>
    </source>
</evidence>
<evidence type="ECO:0000303" key="7">
    <source>
    </source>
</evidence>
<evidence type="ECO:0000305" key="8">
    <source>
    </source>
</evidence>
<evidence type="ECO:0000305" key="9">
    <source>
    </source>
</evidence>
<proteinExistence type="evidence at transcript level"/>
<dbReference type="EC" id="2.1.1.-" evidence="8"/>
<dbReference type="EMBL" id="CM001232">
    <property type="protein sequence ID" value="EHA55876.1"/>
    <property type="molecule type" value="Genomic_DNA"/>
</dbReference>
<dbReference type="RefSeq" id="XP_003715683.1">
    <property type="nucleotide sequence ID" value="XM_003715635.1"/>
</dbReference>
<dbReference type="SMR" id="G4MWB6"/>
<dbReference type="EnsemblFungi" id="MGG_08377T0">
    <property type="protein sequence ID" value="MGG_08377T0"/>
    <property type="gene ID" value="MGG_08377"/>
</dbReference>
<dbReference type="GeneID" id="2678552"/>
<dbReference type="KEGG" id="mgr:MGG_08377"/>
<dbReference type="VEuPathDB" id="FungiDB:MGG_08377"/>
<dbReference type="eggNOG" id="KOG3178">
    <property type="taxonomic scope" value="Eukaryota"/>
</dbReference>
<dbReference type="HOGENOM" id="CLU_005533_1_2_1"/>
<dbReference type="InParanoid" id="G4MWB6"/>
<dbReference type="OMA" id="SCIAIRK"/>
<dbReference type="OrthoDB" id="1535081at2759"/>
<dbReference type="Proteomes" id="UP000009058">
    <property type="component" value="Chromosome 2"/>
</dbReference>
<dbReference type="GO" id="GO:0008171">
    <property type="term" value="F:O-methyltransferase activity"/>
    <property type="evidence" value="ECO:0007669"/>
    <property type="project" value="InterPro"/>
</dbReference>
<dbReference type="GO" id="GO:0046983">
    <property type="term" value="F:protein dimerization activity"/>
    <property type="evidence" value="ECO:0007669"/>
    <property type="project" value="InterPro"/>
</dbReference>
<dbReference type="GO" id="GO:0032259">
    <property type="term" value="P:methylation"/>
    <property type="evidence" value="ECO:0007669"/>
    <property type="project" value="UniProtKB-KW"/>
</dbReference>
<dbReference type="GO" id="GO:0044550">
    <property type="term" value="P:secondary metabolite biosynthetic process"/>
    <property type="evidence" value="ECO:0007669"/>
    <property type="project" value="UniProtKB-ARBA"/>
</dbReference>
<dbReference type="Gene3D" id="3.40.50.150">
    <property type="entry name" value="Vaccinia Virus protein VP39"/>
    <property type="match status" value="1"/>
</dbReference>
<dbReference type="Gene3D" id="1.10.10.10">
    <property type="entry name" value="Winged helix-like DNA-binding domain superfamily/Winged helix DNA-binding domain"/>
    <property type="match status" value="1"/>
</dbReference>
<dbReference type="InterPro" id="IPR016461">
    <property type="entry name" value="COMT-like"/>
</dbReference>
<dbReference type="InterPro" id="IPR001077">
    <property type="entry name" value="O_MeTrfase_dom"/>
</dbReference>
<dbReference type="InterPro" id="IPR012967">
    <property type="entry name" value="Plant_O-MeTrfase_dimerisation"/>
</dbReference>
<dbReference type="InterPro" id="IPR029063">
    <property type="entry name" value="SAM-dependent_MTases_sf"/>
</dbReference>
<dbReference type="InterPro" id="IPR036388">
    <property type="entry name" value="WH-like_DNA-bd_sf"/>
</dbReference>
<dbReference type="InterPro" id="IPR036390">
    <property type="entry name" value="WH_DNA-bd_sf"/>
</dbReference>
<dbReference type="PANTHER" id="PTHR43712:SF5">
    <property type="entry name" value="O-METHYLTRANSFERASE ASQN-RELATED"/>
    <property type="match status" value="1"/>
</dbReference>
<dbReference type="PANTHER" id="PTHR43712">
    <property type="entry name" value="PUTATIVE (AFU_ORTHOLOGUE AFUA_4G14580)-RELATED"/>
    <property type="match status" value="1"/>
</dbReference>
<dbReference type="Pfam" id="PF08100">
    <property type="entry name" value="Dimerisation"/>
    <property type="match status" value="1"/>
</dbReference>
<dbReference type="Pfam" id="PF00891">
    <property type="entry name" value="Methyltransf_2"/>
    <property type="match status" value="1"/>
</dbReference>
<dbReference type="SUPFAM" id="SSF53335">
    <property type="entry name" value="S-adenosyl-L-methionine-dependent methyltransferases"/>
    <property type="match status" value="1"/>
</dbReference>
<dbReference type="SUPFAM" id="SSF46785">
    <property type="entry name" value="Winged helix' DNA-binding domain"/>
    <property type="match status" value="1"/>
</dbReference>
<dbReference type="PROSITE" id="PS51683">
    <property type="entry name" value="SAM_OMT_II"/>
    <property type="match status" value="1"/>
</dbReference>
<feature type="chain" id="PRO_0000449450" description="O-methyltransferase OME1">
    <location>
        <begin position="1"/>
        <end position="498"/>
    </location>
</feature>
<feature type="region of interest" description="Disordered" evidence="2">
    <location>
        <begin position="1"/>
        <end position="23"/>
    </location>
</feature>
<feature type="region of interest" description="Disordered" evidence="2">
    <location>
        <begin position="42"/>
        <end position="83"/>
    </location>
</feature>
<feature type="compositionally biased region" description="Polar residues" evidence="2">
    <location>
        <begin position="1"/>
        <end position="19"/>
    </location>
</feature>
<feature type="compositionally biased region" description="Low complexity" evidence="2">
    <location>
        <begin position="50"/>
        <end position="65"/>
    </location>
</feature>
<feature type="active site" description="Proton acceptor" evidence="1">
    <location>
        <position position="406"/>
    </location>
</feature>
<feature type="binding site" evidence="1">
    <location>
        <position position="358"/>
    </location>
    <ligand>
        <name>S-adenosyl-L-methionine</name>
        <dbReference type="ChEBI" id="CHEBI:59789"/>
    </ligand>
</feature>
<name>OME1B_PYRO7</name>
<organism>
    <name type="scientific">Pyricularia oryzae (strain 70-15 / ATCC MYA-4617 / FGSC 8958)</name>
    <name type="common">Rice blast fungus</name>
    <name type="synonym">Magnaporthe oryzae</name>
    <dbReference type="NCBI Taxonomy" id="242507"/>
    <lineage>
        <taxon>Eukaryota</taxon>
        <taxon>Fungi</taxon>
        <taxon>Dikarya</taxon>
        <taxon>Ascomycota</taxon>
        <taxon>Pezizomycotina</taxon>
        <taxon>Sordariomycetes</taxon>
        <taxon>Sordariomycetidae</taxon>
        <taxon>Magnaporthales</taxon>
        <taxon>Pyriculariaceae</taxon>
        <taxon>Pyricularia</taxon>
    </lineage>
</organism>
<sequence length="498" mass="54893">MSTMALHRTASTKSDTTMACPNGLVKNLPLGGNTKCSACGSHRAEKRRASSTSSVSTTPTSPSFSEADWSPLHNSSQEPQPEYTKVANSLMRAITDYVGHLQNENLPMPSLEPAADAHGVLKHPEGVAARNAVVELAQRIVAMTMDPDMNLLISSLQFHFCSSLKVAIDLKVHEHVPRRGSITSSELAAKVGADESILVRIMRALILKHVFCSPTPGTYAHTAMSWCMMKSPDAIDLLGHRLDESFRASSRQADALALVNYREPDEADVKGFSMAFGTTENFWEVLGHEGEEERAQRFNRAMRAVSLNTLDVIPRMYPFDRIRGDGLLVDVGGGLGQVARAIMGAHRGAGLRSCIVQDAHAGDDAKKQPDVMEANRKLGVELQKHNFFDPQPVKGASVYFLRHIFHDWPDRACVKILKQTVEAMGKDSTLLICDQVVDDEASPQATLYDIDMWSLFGGKERNRSEWEALFRSADERLYIKKVWTTAEAPTTMLEVCLS</sequence>
<keyword id="KW-0489">Methyltransferase</keyword>
<keyword id="KW-1185">Reference proteome</keyword>
<keyword id="KW-0949">S-adenosyl-L-methionine</keyword>
<keyword id="KW-0808">Transferase</keyword>